<protein>
    <recommendedName>
        <fullName evidence="1">Putative pre-16S rRNA nuclease</fullName>
        <ecNumber evidence="1">3.1.-.-</ecNumber>
    </recommendedName>
</protein>
<organism>
    <name type="scientific">Clostridium perfringens (strain SM101 / Type A)</name>
    <dbReference type="NCBI Taxonomy" id="289380"/>
    <lineage>
        <taxon>Bacteria</taxon>
        <taxon>Bacillati</taxon>
        <taxon>Bacillota</taxon>
        <taxon>Clostridia</taxon>
        <taxon>Eubacteriales</taxon>
        <taxon>Clostridiaceae</taxon>
        <taxon>Clostridium</taxon>
    </lineage>
</organism>
<keyword id="KW-0963">Cytoplasm</keyword>
<keyword id="KW-0378">Hydrolase</keyword>
<keyword id="KW-0540">Nuclease</keyword>
<keyword id="KW-0690">Ribosome biogenesis</keyword>
<sequence>MRILGLDIGSKTIGVAVSDPLGWTAQGVTTIKRDCYTKDVEAVMKICKEYGVETIVAGMPKNMNGTIGPSGEMVKNLCEQIEKSFDGKIEFWDERLTTVAAHRAMLEADLSRAKRKKIVDKIAATYILQGYLDRISK</sequence>
<comment type="function">
    <text evidence="1">Could be a nuclease involved in processing of the 5'-end of pre-16S rRNA.</text>
</comment>
<comment type="subcellular location">
    <subcellularLocation>
        <location evidence="1">Cytoplasm</location>
    </subcellularLocation>
</comment>
<comment type="similarity">
    <text evidence="1">Belongs to the YqgF nuclease family.</text>
</comment>
<name>YQGF_CLOPS</name>
<gene>
    <name type="ordered locus">CPR_1748</name>
</gene>
<proteinExistence type="inferred from homology"/>
<reference key="1">
    <citation type="journal article" date="2006" name="Genome Res.">
        <title>Skewed genomic variability in strains of the toxigenic bacterial pathogen, Clostridium perfringens.</title>
        <authorList>
            <person name="Myers G.S.A."/>
            <person name="Rasko D.A."/>
            <person name="Cheung J.K."/>
            <person name="Ravel J."/>
            <person name="Seshadri R."/>
            <person name="DeBoy R.T."/>
            <person name="Ren Q."/>
            <person name="Varga J."/>
            <person name="Awad M.M."/>
            <person name="Brinkac L.M."/>
            <person name="Daugherty S.C."/>
            <person name="Haft D.H."/>
            <person name="Dodson R.J."/>
            <person name="Madupu R."/>
            <person name="Nelson W.C."/>
            <person name="Rosovitz M.J."/>
            <person name="Sullivan S.A."/>
            <person name="Khouri H."/>
            <person name="Dimitrov G.I."/>
            <person name="Watkins K.L."/>
            <person name="Mulligan S."/>
            <person name="Benton J."/>
            <person name="Radune D."/>
            <person name="Fisher D.J."/>
            <person name="Atkins H.S."/>
            <person name="Hiscox T."/>
            <person name="Jost B.H."/>
            <person name="Billington S.J."/>
            <person name="Songer J.G."/>
            <person name="McClane B.A."/>
            <person name="Titball R.W."/>
            <person name="Rood J.I."/>
            <person name="Melville S.B."/>
            <person name="Paulsen I.T."/>
        </authorList>
    </citation>
    <scope>NUCLEOTIDE SEQUENCE [LARGE SCALE GENOMIC DNA]</scope>
    <source>
        <strain>SM101 / Type A</strain>
    </source>
</reference>
<evidence type="ECO:0000255" key="1">
    <source>
        <dbReference type="HAMAP-Rule" id="MF_00651"/>
    </source>
</evidence>
<accession>Q0SS44</accession>
<feature type="chain" id="PRO_0000257522" description="Putative pre-16S rRNA nuclease">
    <location>
        <begin position="1"/>
        <end position="137"/>
    </location>
</feature>
<dbReference type="EC" id="3.1.-.-" evidence="1"/>
<dbReference type="EMBL" id="CP000312">
    <property type="protein sequence ID" value="ABG87177.1"/>
    <property type="molecule type" value="Genomic_DNA"/>
</dbReference>
<dbReference type="SMR" id="Q0SS44"/>
<dbReference type="KEGG" id="cpr:CPR_1748"/>
<dbReference type="BioCyc" id="CPER289380:GI76-1759-MONOMER"/>
<dbReference type="Proteomes" id="UP000001824">
    <property type="component" value="Chromosome"/>
</dbReference>
<dbReference type="GO" id="GO:0005829">
    <property type="term" value="C:cytosol"/>
    <property type="evidence" value="ECO:0007669"/>
    <property type="project" value="TreeGrafter"/>
</dbReference>
<dbReference type="GO" id="GO:0004518">
    <property type="term" value="F:nuclease activity"/>
    <property type="evidence" value="ECO:0007669"/>
    <property type="project" value="UniProtKB-KW"/>
</dbReference>
<dbReference type="GO" id="GO:0000967">
    <property type="term" value="P:rRNA 5'-end processing"/>
    <property type="evidence" value="ECO:0007669"/>
    <property type="project" value="UniProtKB-UniRule"/>
</dbReference>
<dbReference type="CDD" id="cd16964">
    <property type="entry name" value="YqgF"/>
    <property type="match status" value="1"/>
</dbReference>
<dbReference type="Gene3D" id="3.30.420.140">
    <property type="entry name" value="YqgF/RNase H-like domain"/>
    <property type="match status" value="1"/>
</dbReference>
<dbReference type="HAMAP" id="MF_00651">
    <property type="entry name" value="Nuclease_YqgF"/>
    <property type="match status" value="1"/>
</dbReference>
<dbReference type="InterPro" id="IPR012337">
    <property type="entry name" value="RNaseH-like_sf"/>
</dbReference>
<dbReference type="InterPro" id="IPR005227">
    <property type="entry name" value="YqgF"/>
</dbReference>
<dbReference type="InterPro" id="IPR006641">
    <property type="entry name" value="YqgF/RNaseH-like_dom"/>
</dbReference>
<dbReference type="InterPro" id="IPR037027">
    <property type="entry name" value="YqgF/RNaseH-like_dom_sf"/>
</dbReference>
<dbReference type="NCBIfam" id="TIGR00250">
    <property type="entry name" value="RNAse_H_YqgF"/>
    <property type="match status" value="1"/>
</dbReference>
<dbReference type="PANTHER" id="PTHR33317">
    <property type="entry name" value="POLYNUCLEOTIDYL TRANSFERASE, RIBONUCLEASE H-LIKE SUPERFAMILY PROTEIN"/>
    <property type="match status" value="1"/>
</dbReference>
<dbReference type="PANTHER" id="PTHR33317:SF4">
    <property type="entry name" value="POLYNUCLEOTIDYL TRANSFERASE, RIBONUCLEASE H-LIKE SUPERFAMILY PROTEIN"/>
    <property type="match status" value="1"/>
</dbReference>
<dbReference type="Pfam" id="PF03652">
    <property type="entry name" value="RuvX"/>
    <property type="match status" value="1"/>
</dbReference>
<dbReference type="SMART" id="SM00732">
    <property type="entry name" value="YqgFc"/>
    <property type="match status" value="1"/>
</dbReference>
<dbReference type="SUPFAM" id="SSF53098">
    <property type="entry name" value="Ribonuclease H-like"/>
    <property type="match status" value="1"/>
</dbReference>